<gene>
    <name type="primary">HLX</name>
    <name type="synonym">HLX1</name>
</gene>
<protein>
    <recommendedName>
        <fullName>H2.0-like homeobox protein</fullName>
    </recommendedName>
    <alternativeName>
        <fullName>Homeobox protein HB24</fullName>
    </alternativeName>
    <alternativeName>
        <fullName>Homeobox protein HLX1</fullName>
    </alternativeName>
</protein>
<comment type="function">
    <text evidence="1">Transcription factor required for TBX21/T-bet-dependent maturation of Th1 cells as well as maintenance of Th1-specific gene expression. Involved in embryogenesis and hematopoiesis (By similarity).</text>
</comment>
<comment type="interaction">
    <interactant intactId="EBI-6678255">
        <id>Q14774</id>
    </interactant>
    <interactant intactId="EBI-8624731">
        <id>P0C7T5</id>
        <label>ATXN1L</label>
    </interactant>
    <organismsDiffer>false</organismsDiffer>
    <experiments>3</experiments>
</comment>
<comment type="interaction">
    <interactant intactId="EBI-6678255">
        <id>Q14774</id>
    </interactant>
    <interactant intactId="EBI-725606">
        <id>Q9NWQ9</id>
        <label>C14orf119</label>
    </interactant>
    <organismsDiffer>false</organismsDiffer>
    <experiments>3</experiments>
</comment>
<comment type="interaction">
    <interactant intactId="EBI-6678255">
        <id>Q14774</id>
    </interactant>
    <interactant intactId="EBI-3867333">
        <id>A8MQ03</id>
        <label>CYSRT1</label>
    </interactant>
    <organismsDiffer>false</organismsDiffer>
    <experiments>3</experiments>
</comment>
<comment type="interaction">
    <interactant intactId="EBI-6678255">
        <id>Q14774</id>
    </interactant>
    <interactant intactId="EBI-740376">
        <id>Q86UW9</id>
        <label>DTX2</label>
    </interactant>
    <organismsDiffer>false</organismsDiffer>
    <experiments>3</experiments>
</comment>
<comment type="interaction">
    <interactant intactId="EBI-6678255">
        <id>Q14774</id>
    </interactant>
    <interactant intactId="EBI-1759806">
        <id>O75593</id>
        <label>FOXH1</label>
    </interactant>
    <organismsDiffer>false</organismsDiffer>
    <experiments>3</experiments>
</comment>
<comment type="interaction">
    <interactant intactId="EBI-6678255">
        <id>Q14774</id>
    </interactant>
    <interactant intactId="EBI-2341787">
        <id>Q17RB8</id>
        <label>LONRF1</label>
    </interactant>
    <organismsDiffer>false</organismsDiffer>
    <experiments>3</experiments>
</comment>
<comment type="interaction">
    <interactant intactId="EBI-6678255">
        <id>Q14774</id>
    </interactant>
    <interactant intactId="EBI-6137472">
        <id>Q9BRT3</id>
        <label>MIEN1</label>
    </interactant>
    <organismsDiffer>false</organismsDiffer>
    <experiments>3</experiments>
</comment>
<comment type="interaction">
    <interactant intactId="EBI-6678255">
        <id>Q14774</id>
    </interactant>
    <interactant intactId="EBI-12754095">
        <id>P86480</id>
        <label>PRR20D</label>
    </interactant>
    <organismsDiffer>false</organismsDiffer>
    <experiments>3</experiments>
</comment>
<comment type="subcellular location">
    <subcellularLocation>
        <location evidence="2">Nucleus</location>
    </subcellularLocation>
</comment>
<comment type="tissue specificity">
    <text>Low level in normal B and T-cells, high level in activated lymphocytes and monocytes. Also found in thymus, tonsil, bone marrow, developing vessels, and fetal brain.</text>
</comment>
<comment type="similarity">
    <text evidence="6">Belongs to the H2.0 homeobox family.</text>
</comment>
<comment type="sequence caution" evidence="6">
    <conflict type="erroneous initiation">
        <sequence resource="EMBL-CDS" id="BAD92049"/>
    </conflict>
    <text>Truncated N-terminus.</text>
</comment>
<comment type="sequence caution" evidence="6">
    <conflict type="frameshift">
        <sequence resource="EMBL-CDS" id="BAD92049"/>
    </conflict>
</comment>
<comment type="sequence caution" evidence="6">
    <conflict type="frameshift">
        <sequence resource="EMBL" id="M60721"/>
    </conflict>
</comment>
<feature type="chain" id="PRO_0000048978" description="H2.0-like homeobox protein">
    <location>
        <begin position="1"/>
        <end position="488"/>
    </location>
</feature>
<feature type="DNA-binding region" description="Homeobox" evidence="2">
    <location>
        <begin position="276"/>
        <end position="335"/>
    </location>
</feature>
<feature type="region of interest" description="Disordered" evidence="3">
    <location>
        <begin position="118"/>
        <end position="173"/>
    </location>
</feature>
<feature type="region of interest" description="Disordered" evidence="3">
    <location>
        <begin position="331"/>
        <end position="488"/>
    </location>
</feature>
<feature type="compositionally biased region" description="Low complexity" evidence="3">
    <location>
        <begin position="125"/>
        <end position="135"/>
    </location>
</feature>
<feature type="compositionally biased region" description="Low complexity" evidence="3">
    <location>
        <begin position="158"/>
        <end position="171"/>
    </location>
</feature>
<feature type="compositionally biased region" description="Basic and acidic residues" evidence="3">
    <location>
        <begin position="334"/>
        <end position="349"/>
    </location>
</feature>
<feature type="compositionally biased region" description="Basic and acidic residues" evidence="3">
    <location>
        <begin position="363"/>
        <end position="372"/>
    </location>
</feature>
<feature type="compositionally biased region" description="Acidic residues" evidence="3">
    <location>
        <begin position="373"/>
        <end position="383"/>
    </location>
</feature>
<feature type="compositionally biased region" description="Basic and acidic residues" evidence="3">
    <location>
        <begin position="390"/>
        <end position="401"/>
    </location>
</feature>
<feature type="compositionally biased region" description="Gly residues" evidence="3">
    <location>
        <begin position="422"/>
        <end position="432"/>
    </location>
</feature>
<feature type="compositionally biased region" description="Low complexity" evidence="3">
    <location>
        <begin position="433"/>
        <end position="454"/>
    </location>
</feature>
<feature type="sequence variant" id="VAR_037162" description="In dbSNP:rs12141189." evidence="4">
    <original>S</original>
    <variation>P</variation>
    <location>
        <position position="116"/>
    </location>
</feature>
<feature type="sequence variant" id="VAR_037163" description="In dbSNP:rs2738755." evidence="5">
    <original>P</original>
    <variation>L</variation>
    <location>
        <position position="356"/>
    </location>
</feature>
<feature type="sequence variant" id="VAR_049582" description="In dbSNP:rs11578466.">
    <original>A</original>
    <variation>G</variation>
    <location>
        <position position="387"/>
    </location>
</feature>
<feature type="sequence conflict" description="In Ref. 1; M60721." evidence="6" ref="1">
    <location>
        <position position="63"/>
    </location>
</feature>
<feature type="sequence conflict" description="In Ref. 1; M60721." evidence="6" ref="1">
    <original>QQQ</original>
    <variation>RRE</variation>
    <location>
        <begin position="134"/>
        <end position="136"/>
    </location>
</feature>
<name>HLX_HUMAN</name>
<reference key="1">
    <citation type="journal article" date="1991" name="New Biol.">
        <title>Cloning of a human homeobox gene that resembles a diverged Drosophila homeobox gene and is expressed in activated lymphocytes.</title>
        <authorList>
            <person name="Deguchi Y."/>
            <person name="Moroney J.F."/>
            <person name="Wilson G.L."/>
            <person name="Fox C.H."/>
            <person name="Winter H.S."/>
            <person name="Kehrl J.H."/>
        </authorList>
    </citation>
    <scope>NUCLEOTIDE SEQUENCE [MRNA]</scope>
    <source>
        <tissue>B-cell</tissue>
    </source>
</reference>
<reference key="2">
    <citation type="submission" date="1999-12" db="EMBL/GenBank/DDBJ databases">
        <title>Genomic sequence of human homeobox gene HLX1.</title>
        <authorList>
            <person name="Hanrahan V."/>
            <person name="Kennedy M.A."/>
        </authorList>
    </citation>
    <scope>NUCLEOTIDE SEQUENCE [GENOMIC DNA]</scope>
</reference>
<reference key="3">
    <citation type="journal article" date="2004" name="Nat. Genet.">
        <title>Complete sequencing and characterization of 21,243 full-length human cDNAs.</title>
        <authorList>
            <person name="Ota T."/>
            <person name="Suzuki Y."/>
            <person name="Nishikawa T."/>
            <person name="Otsuki T."/>
            <person name="Sugiyama T."/>
            <person name="Irie R."/>
            <person name="Wakamatsu A."/>
            <person name="Hayashi K."/>
            <person name="Sato H."/>
            <person name="Nagai K."/>
            <person name="Kimura K."/>
            <person name="Makita H."/>
            <person name="Sekine M."/>
            <person name="Obayashi M."/>
            <person name="Nishi T."/>
            <person name="Shibahara T."/>
            <person name="Tanaka T."/>
            <person name="Ishii S."/>
            <person name="Yamamoto J."/>
            <person name="Saito K."/>
            <person name="Kawai Y."/>
            <person name="Isono Y."/>
            <person name="Nakamura Y."/>
            <person name="Nagahari K."/>
            <person name="Murakami K."/>
            <person name="Yasuda T."/>
            <person name="Iwayanagi T."/>
            <person name="Wagatsuma M."/>
            <person name="Shiratori A."/>
            <person name="Sudo H."/>
            <person name="Hosoiri T."/>
            <person name="Kaku Y."/>
            <person name="Kodaira H."/>
            <person name="Kondo H."/>
            <person name="Sugawara M."/>
            <person name="Takahashi M."/>
            <person name="Kanda K."/>
            <person name="Yokoi T."/>
            <person name="Furuya T."/>
            <person name="Kikkawa E."/>
            <person name="Omura Y."/>
            <person name="Abe K."/>
            <person name="Kamihara K."/>
            <person name="Katsuta N."/>
            <person name="Sato K."/>
            <person name="Tanikawa M."/>
            <person name="Yamazaki M."/>
            <person name="Ninomiya K."/>
            <person name="Ishibashi T."/>
            <person name="Yamashita H."/>
            <person name="Murakawa K."/>
            <person name="Fujimori K."/>
            <person name="Tanai H."/>
            <person name="Kimata M."/>
            <person name="Watanabe M."/>
            <person name="Hiraoka S."/>
            <person name="Chiba Y."/>
            <person name="Ishida S."/>
            <person name="Ono Y."/>
            <person name="Takiguchi S."/>
            <person name="Watanabe S."/>
            <person name="Yosida M."/>
            <person name="Hotuta T."/>
            <person name="Kusano J."/>
            <person name="Kanehori K."/>
            <person name="Takahashi-Fujii A."/>
            <person name="Hara H."/>
            <person name="Tanase T.-O."/>
            <person name="Nomura Y."/>
            <person name="Togiya S."/>
            <person name="Komai F."/>
            <person name="Hara R."/>
            <person name="Takeuchi K."/>
            <person name="Arita M."/>
            <person name="Imose N."/>
            <person name="Musashino K."/>
            <person name="Yuuki H."/>
            <person name="Oshima A."/>
            <person name="Sasaki N."/>
            <person name="Aotsuka S."/>
            <person name="Yoshikawa Y."/>
            <person name="Matsunawa H."/>
            <person name="Ichihara T."/>
            <person name="Shiohata N."/>
            <person name="Sano S."/>
            <person name="Moriya S."/>
            <person name="Momiyama H."/>
            <person name="Satoh N."/>
            <person name="Takami S."/>
            <person name="Terashima Y."/>
            <person name="Suzuki O."/>
            <person name="Nakagawa S."/>
            <person name="Senoh A."/>
            <person name="Mizoguchi H."/>
            <person name="Goto Y."/>
            <person name="Shimizu F."/>
            <person name="Wakebe H."/>
            <person name="Hishigaki H."/>
            <person name="Watanabe T."/>
            <person name="Sugiyama A."/>
            <person name="Takemoto M."/>
            <person name="Kawakami B."/>
            <person name="Yamazaki M."/>
            <person name="Watanabe K."/>
            <person name="Kumagai A."/>
            <person name="Itakura S."/>
            <person name="Fukuzumi Y."/>
            <person name="Fujimori Y."/>
            <person name="Komiyama M."/>
            <person name="Tashiro H."/>
            <person name="Tanigami A."/>
            <person name="Fujiwara T."/>
            <person name="Ono T."/>
            <person name="Yamada K."/>
            <person name="Fujii Y."/>
            <person name="Ozaki K."/>
            <person name="Hirao M."/>
            <person name="Ohmori Y."/>
            <person name="Kawabata A."/>
            <person name="Hikiji T."/>
            <person name="Kobatake N."/>
            <person name="Inagaki H."/>
            <person name="Ikema Y."/>
            <person name="Okamoto S."/>
            <person name="Okitani R."/>
            <person name="Kawakami T."/>
            <person name="Noguchi S."/>
            <person name="Itoh T."/>
            <person name="Shigeta K."/>
            <person name="Senba T."/>
            <person name="Matsumura K."/>
            <person name="Nakajima Y."/>
            <person name="Mizuno T."/>
            <person name="Morinaga M."/>
            <person name="Sasaki M."/>
            <person name="Togashi T."/>
            <person name="Oyama M."/>
            <person name="Hata H."/>
            <person name="Watanabe M."/>
            <person name="Komatsu T."/>
            <person name="Mizushima-Sugano J."/>
            <person name="Satoh T."/>
            <person name="Shirai Y."/>
            <person name="Takahashi Y."/>
            <person name="Nakagawa K."/>
            <person name="Okumura K."/>
            <person name="Nagase T."/>
            <person name="Nomura N."/>
            <person name="Kikuchi H."/>
            <person name="Masuho Y."/>
            <person name="Yamashita R."/>
            <person name="Nakai K."/>
            <person name="Yada T."/>
            <person name="Nakamura Y."/>
            <person name="Ohara O."/>
            <person name="Isogai T."/>
            <person name="Sugano S."/>
        </authorList>
    </citation>
    <scope>NUCLEOTIDE SEQUENCE [LARGE SCALE MRNA]</scope>
    <source>
        <tissue>Small intestine</tissue>
    </source>
</reference>
<reference key="4">
    <citation type="submission" date="2005-03" db="EMBL/GenBank/DDBJ databases">
        <authorList>
            <person name="Totoki Y."/>
            <person name="Toyoda A."/>
            <person name="Takeda T."/>
            <person name="Sakaki Y."/>
            <person name="Tanaka A."/>
            <person name="Yokoyama S."/>
            <person name="Ohara O."/>
            <person name="Nagase T."/>
            <person name="Kikuno R.F."/>
        </authorList>
    </citation>
    <scope>NUCLEOTIDE SEQUENCE [LARGE SCALE MRNA]</scope>
    <scope>VARIANT LEU-356</scope>
    <source>
        <tissue>Brain</tissue>
    </source>
</reference>
<reference key="5">
    <citation type="journal article" date="2006" name="Nature">
        <title>The DNA sequence and biological annotation of human chromosome 1.</title>
        <authorList>
            <person name="Gregory S.G."/>
            <person name="Barlow K.F."/>
            <person name="McLay K.E."/>
            <person name="Kaul R."/>
            <person name="Swarbreck D."/>
            <person name="Dunham A."/>
            <person name="Scott C.E."/>
            <person name="Howe K.L."/>
            <person name="Woodfine K."/>
            <person name="Spencer C.C.A."/>
            <person name="Jones M.C."/>
            <person name="Gillson C."/>
            <person name="Searle S."/>
            <person name="Zhou Y."/>
            <person name="Kokocinski F."/>
            <person name="McDonald L."/>
            <person name="Evans R."/>
            <person name="Phillips K."/>
            <person name="Atkinson A."/>
            <person name="Cooper R."/>
            <person name="Jones C."/>
            <person name="Hall R.E."/>
            <person name="Andrews T.D."/>
            <person name="Lloyd C."/>
            <person name="Ainscough R."/>
            <person name="Almeida J.P."/>
            <person name="Ambrose K.D."/>
            <person name="Anderson F."/>
            <person name="Andrew R.W."/>
            <person name="Ashwell R.I.S."/>
            <person name="Aubin K."/>
            <person name="Babbage A.K."/>
            <person name="Bagguley C.L."/>
            <person name="Bailey J."/>
            <person name="Beasley H."/>
            <person name="Bethel G."/>
            <person name="Bird C.P."/>
            <person name="Bray-Allen S."/>
            <person name="Brown J.Y."/>
            <person name="Brown A.J."/>
            <person name="Buckley D."/>
            <person name="Burton J."/>
            <person name="Bye J."/>
            <person name="Carder C."/>
            <person name="Chapman J.C."/>
            <person name="Clark S.Y."/>
            <person name="Clarke G."/>
            <person name="Clee C."/>
            <person name="Cobley V."/>
            <person name="Collier R.E."/>
            <person name="Corby N."/>
            <person name="Coville G.J."/>
            <person name="Davies J."/>
            <person name="Deadman R."/>
            <person name="Dunn M."/>
            <person name="Earthrowl M."/>
            <person name="Ellington A.G."/>
            <person name="Errington H."/>
            <person name="Frankish A."/>
            <person name="Frankland J."/>
            <person name="French L."/>
            <person name="Garner P."/>
            <person name="Garnett J."/>
            <person name="Gay L."/>
            <person name="Ghori M.R.J."/>
            <person name="Gibson R."/>
            <person name="Gilby L.M."/>
            <person name="Gillett W."/>
            <person name="Glithero R.J."/>
            <person name="Grafham D.V."/>
            <person name="Griffiths C."/>
            <person name="Griffiths-Jones S."/>
            <person name="Grocock R."/>
            <person name="Hammond S."/>
            <person name="Harrison E.S.I."/>
            <person name="Hart E."/>
            <person name="Haugen E."/>
            <person name="Heath P.D."/>
            <person name="Holmes S."/>
            <person name="Holt K."/>
            <person name="Howden P.J."/>
            <person name="Hunt A.R."/>
            <person name="Hunt S.E."/>
            <person name="Hunter G."/>
            <person name="Isherwood J."/>
            <person name="James R."/>
            <person name="Johnson C."/>
            <person name="Johnson D."/>
            <person name="Joy A."/>
            <person name="Kay M."/>
            <person name="Kershaw J.K."/>
            <person name="Kibukawa M."/>
            <person name="Kimberley A.M."/>
            <person name="King A."/>
            <person name="Knights A.J."/>
            <person name="Lad H."/>
            <person name="Laird G."/>
            <person name="Lawlor S."/>
            <person name="Leongamornlert D.A."/>
            <person name="Lloyd D.M."/>
            <person name="Loveland J."/>
            <person name="Lovell J."/>
            <person name="Lush M.J."/>
            <person name="Lyne R."/>
            <person name="Martin S."/>
            <person name="Mashreghi-Mohammadi M."/>
            <person name="Matthews L."/>
            <person name="Matthews N.S.W."/>
            <person name="McLaren S."/>
            <person name="Milne S."/>
            <person name="Mistry S."/>
            <person name="Moore M.J.F."/>
            <person name="Nickerson T."/>
            <person name="O'Dell C.N."/>
            <person name="Oliver K."/>
            <person name="Palmeiri A."/>
            <person name="Palmer S.A."/>
            <person name="Parker A."/>
            <person name="Patel D."/>
            <person name="Pearce A.V."/>
            <person name="Peck A.I."/>
            <person name="Pelan S."/>
            <person name="Phelps K."/>
            <person name="Phillimore B.J."/>
            <person name="Plumb R."/>
            <person name="Rajan J."/>
            <person name="Raymond C."/>
            <person name="Rouse G."/>
            <person name="Saenphimmachak C."/>
            <person name="Sehra H.K."/>
            <person name="Sheridan E."/>
            <person name="Shownkeen R."/>
            <person name="Sims S."/>
            <person name="Skuce C.D."/>
            <person name="Smith M."/>
            <person name="Steward C."/>
            <person name="Subramanian S."/>
            <person name="Sycamore N."/>
            <person name="Tracey A."/>
            <person name="Tromans A."/>
            <person name="Van Helmond Z."/>
            <person name="Wall M."/>
            <person name="Wallis J.M."/>
            <person name="White S."/>
            <person name="Whitehead S.L."/>
            <person name="Wilkinson J.E."/>
            <person name="Willey D.L."/>
            <person name="Williams H."/>
            <person name="Wilming L."/>
            <person name="Wray P.W."/>
            <person name="Wu Z."/>
            <person name="Coulson A."/>
            <person name="Vaudin M."/>
            <person name="Sulston J.E."/>
            <person name="Durbin R.M."/>
            <person name="Hubbard T."/>
            <person name="Wooster R."/>
            <person name="Dunham I."/>
            <person name="Carter N.P."/>
            <person name="McVean G."/>
            <person name="Ross M.T."/>
            <person name="Harrow J."/>
            <person name="Olson M.V."/>
            <person name="Beck S."/>
            <person name="Rogers J."/>
            <person name="Bentley D.R."/>
        </authorList>
    </citation>
    <scope>NUCLEOTIDE SEQUENCE [LARGE SCALE GENOMIC DNA]</scope>
</reference>
<reference key="6">
    <citation type="submission" date="2005-09" db="EMBL/GenBank/DDBJ databases">
        <authorList>
            <person name="Mural R.J."/>
            <person name="Istrail S."/>
            <person name="Sutton G.G."/>
            <person name="Florea L."/>
            <person name="Halpern A.L."/>
            <person name="Mobarry C.M."/>
            <person name="Lippert R."/>
            <person name="Walenz B."/>
            <person name="Shatkay H."/>
            <person name="Dew I."/>
            <person name="Miller J.R."/>
            <person name="Flanigan M.J."/>
            <person name="Edwards N.J."/>
            <person name="Bolanos R."/>
            <person name="Fasulo D."/>
            <person name="Halldorsson B.V."/>
            <person name="Hannenhalli S."/>
            <person name="Turner R."/>
            <person name="Yooseph S."/>
            <person name="Lu F."/>
            <person name="Nusskern D.R."/>
            <person name="Shue B.C."/>
            <person name="Zheng X.H."/>
            <person name="Zhong F."/>
            <person name="Delcher A.L."/>
            <person name="Huson D.H."/>
            <person name="Kravitz S.A."/>
            <person name="Mouchard L."/>
            <person name="Reinert K."/>
            <person name="Remington K.A."/>
            <person name="Clark A.G."/>
            <person name="Waterman M.S."/>
            <person name="Eichler E.E."/>
            <person name="Adams M.D."/>
            <person name="Hunkapiller M.W."/>
            <person name="Myers E.W."/>
            <person name="Venter J.C."/>
        </authorList>
    </citation>
    <scope>NUCLEOTIDE SEQUENCE [LARGE SCALE GENOMIC DNA]</scope>
</reference>
<reference key="7">
    <citation type="journal article" date="2004" name="Genome Res.">
        <title>The status, quality, and expansion of the NIH full-length cDNA project: the Mammalian Gene Collection (MGC).</title>
        <authorList>
            <consortium name="The MGC Project Team"/>
        </authorList>
    </citation>
    <scope>NUCLEOTIDE SEQUENCE [LARGE SCALE MRNA]</scope>
    <source>
        <tissue>Retina</tissue>
    </source>
</reference>
<reference key="8">
    <citation type="journal article" date="1994" name="Genomics">
        <title>Genomic structure, promoter sequence, and revised translation of human homeobox gene HLX1.</title>
        <authorList>
            <person name="Kennedy M.A."/>
            <person name="Rayner J.C."/>
            <person name="Morris C.M."/>
        </authorList>
    </citation>
    <scope>NUCLEOTIDE SEQUENCE [GENOMIC DNA] OF 1-326</scope>
    <scope>VARIANT PRO-116</scope>
</reference>
<reference key="9">
    <citation type="journal article" date="1993" name="Genomics">
        <title>Linkage localization of TGFB2 and the human homeobox gene HLX1 to chromosome 1q.</title>
        <authorList>
            <person name="Nishimura D.Y."/>
            <person name="Purchio A.F."/>
            <person name="Murray J.C."/>
        </authorList>
    </citation>
    <scope>NUCLEOTIDE SEQUENCE [GENOMIC DNA] OF 350-369</scope>
</reference>
<reference key="10">
    <citation type="journal article" date="2009" name="Anal. Chem.">
        <title>Lys-N and trypsin cover complementary parts of the phosphoproteome in a refined SCX-based approach.</title>
        <authorList>
            <person name="Gauci S."/>
            <person name="Helbig A.O."/>
            <person name="Slijper M."/>
            <person name="Krijgsveld J."/>
            <person name="Heck A.J."/>
            <person name="Mohammed S."/>
        </authorList>
    </citation>
    <scope>IDENTIFICATION BY MASS SPECTROMETRY [LARGE SCALE ANALYSIS]</scope>
</reference>
<organism>
    <name type="scientific">Homo sapiens</name>
    <name type="common">Human</name>
    <dbReference type="NCBI Taxonomy" id="9606"/>
    <lineage>
        <taxon>Eukaryota</taxon>
        <taxon>Metazoa</taxon>
        <taxon>Chordata</taxon>
        <taxon>Craniata</taxon>
        <taxon>Vertebrata</taxon>
        <taxon>Euteleostomi</taxon>
        <taxon>Mammalia</taxon>
        <taxon>Eutheria</taxon>
        <taxon>Euarchontoglires</taxon>
        <taxon>Primates</taxon>
        <taxon>Haplorrhini</taxon>
        <taxon>Catarrhini</taxon>
        <taxon>Hominidae</taxon>
        <taxon>Homo</taxon>
    </lineage>
</organism>
<accession>Q14774</accession>
<accession>B2R8A8</accession>
<accession>Q15988</accession>
<accession>Q59HE7</accession>
<accession>Q9NZ75</accession>
<keyword id="KW-0221">Differentiation</keyword>
<keyword id="KW-0238">DNA-binding</keyword>
<keyword id="KW-0371">Homeobox</keyword>
<keyword id="KW-0539">Nucleus</keyword>
<keyword id="KW-1267">Proteomics identification</keyword>
<keyword id="KW-1185">Reference proteome</keyword>
<keyword id="KW-0804">Transcription</keyword>
<keyword id="KW-0805">Transcription regulation</keyword>
<sequence>MFAAGLAPFYASNFSLWSAAYCSSAGPGGCSFPLDPAAVKKPSFCIADILHAGVGDLGAAPEGLAGASAAALTAHLGSVHPHASFQAAARSPLRPTPVVAPSEVPAGFPQRLSPLSAAYHHHHPQQQQQQQQPQQQQPPPPPRAGALQPPASGTRVVPNPHHSGSAPAPSSKDLKFGIDRILSAEFDPKVKEGNTLRDLTSLLTGGRPAGVHLSGLQPSAGQFFASLDPINEASAILSPLNSNPRNSVQHQFQDTFPGPYAVLTKDTMPQTYKRKRSWSRAVFSNLQRKGLEKRFEIQKYVTKPDRKQLAAMLGLTDAQVKVWFQNRRMKWRHSKEAQAQKDKDKEAGEKPSGGAPAADGEQDERSPSRSEGEAESESSDSESLDMAPSDTERTEGSERSLHQTTVIKAPVTGALITASSAGSGGSSGGGGNSFSFSSASSLSSSSTSAGCASSLGGGGASELLPATQPTASSAPKSPEPAQGALGCL</sequence>
<dbReference type="EMBL" id="M60721">
    <property type="status" value="NOT_ANNOTATED_CDS"/>
    <property type="molecule type" value="mRNA"/>
</dbReference>
<dbReference type="EMBL" id="AF217621">
    <property type="protein sequence ID" value="AAF65541.1"/>
    <property type="molecule type" value="Genomic_DNA"/>
</dbReference>
<dbReference type="EMBL" id="AK313298">
    <property type="protein sequence ID" value="BAG36105.1"/>
    <property type="molecule type" value="mRNA"/>
</dbReference>
<dbReference type="EMBL" id="AB208812">
    <property type="protein sequence ID" value="BAD92049.1"/>
    <property type="status" value="ALT_SEQ"/>
    <property type="molecule type" value="mRNA"/>
</dbReference>
<dbReference type="EMBL" id="AL445423">
    <property type="status" value="NOT_ANNOTATED_CDS"/>
    <property type="molecule type" value="Genomic_DNA"/>
</dbReference>
<dbReference type="EMBL" id="CH471100">
    <property type="protein sequence ID" value="EAW93289.1"/>
    <property type="molecule type" value="Genomic_DNA"/>
</dbReference>
<dbReference type="EMBL" id="BC007294">
    <property type="protein sequence ID" value="AAH07294.1"/>
    <property type="molecule type" value="mRNA"/>
</dbReference>
<dbReference type="EMBL" id="BC033808">
    <property type="protein sequence ID" value="AAH33808.1"/>
    <property type="molecule type" value="mRNA"/>
</dbReference>
<dbReference type="EMBL" id="U14328">
    <property type="protein sequence ID" value="AAC51346.1"/>
    <property type="molecule type" value="Genomic_DNA"/>
</dbReference>
<dbReference type="EMBL" id="U14325">
    <property type="protein sequence ID" value="AAC51346.1"/>
    <property type="status" value="JOINED"/>
    <property type="molecule type" value="Genomic_DNA"/>
</dbReference>
<dbReference type="EMBL" id="U14326">
    <property type="protein sequence ID" value="AAC51346.1"/>
    <property type="status" value="JOINED"/>
    <property type="molecule type" value="Genomic_DNA"/>
</dbReference>
<dbReference type="EMBL" id="U14327">
    <property type="protein sequence ID" value="AAC51346.1"/>
    <property type="status" value="JOINED"/>
    <property type="molecule type" value="Genomic_DNA"/>
</dbReference>
<dbReference type="EMBL" id="S56767">
    <property type="protein sequence ID" value="AAD13883.1"/>
    <property type="molecule type" value="Genomic_DNA"/>
</dbReference>
<dbReference type="CCDS" id="CCDS1527.1"/>
<dbReference type="PIR" id="A55180">
    <property type="entry name" value="A55180"/>
</dbReference>
<dbReference type="RefSeq" id="NP_068777.1">
    <property type="nucleotide sequence ID" value="NM_021958.4"/>
</dbReference>
<dbReference type="SMR" id="Q14774"/>
<dbReference type="BioGRID" id="109387">
    <property type="interactions" value="39"/>
</dbReference>
<dbReference type="FunCoup" id="Q14774">
    <property type="interactions" value="427"/>
</dbReference>
<dbReference type="IntAct" id="Q14774">
    <property type="interactions" value="33"/>
</dbReference>
<dbReference type="MINT" id="Q14774"/>
<dbReference type="STRING" id="9606.ENSP00000355870"/>
<dbReference type="GlyGen" id="Q14774">
    <property type="glycosylation" value="1 site"/>
</dbReference>
<dbReference type="iPTMnet" id="Q14774"/>
<dbReference type="PhosphoSitePlus" id="Q14774"/>
<dbReference type="BioMuta" id="HLX"/>
<dbReference type="DMDM" id="160291960"/>
<dbReference type="jPOST" id="Q14774"/>
<dbReference type="MassIVE" id="Q14774"/>
<dbReference type="PaxDb" id="9606-ENSP00000355870"/>
<dbReference type="PeptideAtlas" id="Q14774"/>
<dbReference type="ProteomicsDB" id="60168"/>
<dbReference type="Antibodypedia" id="910">
    <property type="antibodies" value="258 antibodies from 32 providers"/>
</dbReference>
<dbReference type="DNASU" id="3142"/>
<dbReference type="Ensembl" id="ENST00000366903.8">
    <property type="protein sequence ID" value="ENSP00000355870.5"/>
    <property type="gene ID" value="ENSG00000136630.13"/>
</dbReference>
<dbReference type="GeneID" id="3142"/>
<dbReference type="KEGG" id="hsa:3142"/>
<dbReference type="MANE-Select" id="ENST00000366903.8">
    <property type="protein sequence ID" value="ENSP00000355870.5"/>
    <property type="RefSeq nucleotide sequence ID" value="NM_021958.4"/>
    <property type="RefSeq protein sequence ID" value="NP_068777.1"/>
</dbReference>
<dbReference type="UCSC" id="uc001hmv.5">
    <property type="organism name" value="human"/>
</dbReference>
<dbReference type="AGR" id="HGNC:4978"/>
<dbReference type="CTD" id="3142"/>
<dbReference type="DisGeNET" id="3142"/>
<dbReference type="GeneCards" id="HLX"/>
<dbReference type="HGNC" id="HGNC:4978">
    <property type="gene designation" value="HLX"/>
</dbReference>
<dbReference type="HPA" id="ENSG00000136630">
    <property type="expression patterns" value="Tissue enhanced (bone)"/>
</dbReference>
<dbReference type="MalaCards" id="HLX"/>
<dbReference type="MIM" id="142995">
    <property type="type" value="gene"/>
</dbReference>
<dbReference type="neXtProt" id="NX_Q14774"/>
<dbReference type="OpenTargets" id="ENSG00000136630"/>
<dbReference type="Orphanet" id="527468">
    <property type="disease" value="Diaphragmatic hernia-short bowel-asplenia syndrome"/>
</dbReference>
<dbReference type="PharmGKB" id="PA162391017"/>
<dbReference type="VEuPathDB" id="HostDB:ENSG00000136630"/>
<dbReference type="eggNOG" id="KOG0488">
    <property type="taxonomic scope" value="Eukaryota"/>
</dbReference>
<dbReference type="GeneTree" id="ENSGT00950000183093"/>
<dbReference type="HOGENOM" id="CLU_043671_1_0_1"/>
<dbReference type="InParanoid" id="Q14774"/>
<dbReference type="OMA" id="VHHGGPF"/>
<dbReference type="OrthoDB" id="6159439at2759"/>
<dbReference type="PAN-GO" id="Q14774">
    <property type="GO annotations" value="1 GO annotation based on evolutionary models"/>
</dbReference>
<dbReference type="PhylomeDB" id="Q14774"/>
<dbReference type="TreeFam" id="TF350735"/>
<dbReference type="PathwayCommons" id="Q14774"/>
<dbReference type="SignaLink" id="Q14774"/>
<dbReference type="SIGNOR" id="Q14774"/>
<dbReference type="BioGRID-ORCS" id="3142">
    <property type="hits" value="18 hits in 1175 CRISPR screens"/>
</dbReference>
<dbReference type="GeneWiki" id="HLX_(gene)"/>
<dbReference type="GenomeRNAi" id="3142"/>
<dbReference type="Pharos" id="Q14774">
    <property type="development level" value="Tbio"/>
</dbReference>
<dbReference type="PRO" id="PR:Q14774"/>
<dbReference type="Proteomes" id="UP000005640">
    <property type="component" value="Chromosome 1"/>
</dbReference>
<dbReference type="RNAct" id="Q14774">
    <property type="molecule type" value="protein"/>
</dbReference>
<dbReference type="Bgee" id="ENSG00000136630">
    <property type="expression patterns" value="Expressed in stromal cell of endometrium and 100 other cell types or tissues"/>
</dbReference>
<dbReference type="ExpressionAtlas" id="Q14774">
    <property type="expression patterns" value="baseline and differential"/>
</dbReference>
<dbReference type="GO" id="GO:0000785">
    <property type="term" value="C:chromatin"/>
    <property type="evidence" value="ECO:0000247"/>
    <property type="project" value="NTNU_SB"/>
</dbReference>
<dbReference type="GO" id="GO:0005634">
    <property type="term" value="C:nucleus"/>
    <property type="evidence" value="ECO:0007669"/>
    <property type="project" value="UniProtKB-SubCell"/>
</dbReference>
<dbReference type="GO" id="GO:0000981">
    <property type="term" value="F:DNA-binding transcription factor activity, RNA polymerase II-specific"/>
    <property type="evidence" value="ECO:0000247"/>
    <property type="project" value="NTNU_SB"/>
</dbReference>
<dbReference type="GO" id="GO:0043565">
    <property type="term" value="F:sequence-specific DNA binding"/>
    <property type="evidence" value="ECO:0000314"/>
    <property type="project" value="MGI"/>
</dbReference>
<dbReference type="GO" id="GO:0048557">
    <property type="term" value="P:embryonic digestive tract morphogenesis"/>
    <property type="evidence" value="ECO:0007669"/>
    <property type="project" value="Ensembl"/>
</dbReference>
<dbReference type="GO" id="GO:0048484">
    <property type="term" value="P:enteric nervous system development"/>
    <property type="evidence" value="ECO:0007669"/>
    <property type="project" value="Ensembl"/>
</dbReference>
<dbReference type="GO" id="GO:0050673">
    <property type="term" value="P:epithelial cell proliferation"/>
    <property type="evidence" value="ECO:0007669"/>
    <property type="project" value="Ensembl"/>
</dbReference>
<dbReference type="GO" id="GO:0001889">
    <property type="term" value="P:liver development"/>
    <property type="evidence" value="ECO:0007669"/>
    <property type="project" value="Ensembl"/>
</dbReference>
<dbReference type="GO" id="GO:0045629">
    <property type="term" value="P:negative regulation of T-helper 2 cell differentiation"/>
    <property type="evidence" value="ECO:0007669"/>
    <property type="project" value="Ensembl"/>
</dbReference>
<dbReference type="GO" id="GO:0035265">
    <property type="term" value="P:organ growth"/>
    <property type="evidence" value="ECO:0007669"/>
    <property type="project" value="Ensembl"/>
</dbReference>
<dbReference type="GO" id="GO:0050679">
    <property type="term" value="P:positive regulation of epithelial cell proliferation"/>
    <property type="evidence" value="ECO:0007669"/>
    <property type="project" value="Ensembl"/>
</dbReference>
<dbReference type="GO" id="GO:0046622">
    <property type="term" value="P:positive regulation of organ growth"/>
    <property type="evidence" value="ECO:0007669"/>
    <property type="project" value="Ensembl"/>
</dbReference>
<dbReference type="GO" id="GO:0045627">
    <property type="term" value="P:positive regulation of T-helper 1 cell differentiation"/>
    <property type="evidence" value="ECO:0007669"/>
    <property type="project" value="Ensembl"/>
</dbReference>
<dbReference type="GO" id="GO:0007165">
    <property type="term" value="P:signal transduction"/>
    <property type="evidence" value="ECO:0000304"/>
    <property type="project" value="ProtInc"/>
</dbReference>
<dbReference type="GO" id="GO:0007519">
    <property type="term" value="P:skeletal muscle tissue development"/>
    <property type="evidence" value="ECO:0007669"/>
    <property type="project" value="Ensembl"/>
</dbReference>
<dbReference type="GO" id="GO:0045063">
    <property type="term" value="P:T-helper 1 cell differentiation"/>
    <property type="evidence" value="ECO:0007669"/>
    <property type="project" value="Ensembl"/>
</dbReference>
<dbReference type="GO" id="GO:0045064">
    <property type="term" value="P:T-helper 2 cell differentiation"/>
    <property type="evidence" value="ECO:0007669"/>
    <property type="project" value="Ensembl"/>
</dbReference>
<dbReference type="CDD" id="cd00086">
    <property type="entry name" value="homeodomain"/>
    <property type="match status" value="1"/>
</dbReference>
<dbReference type="FunFam" id="1.10.10.60:FF:000249">
    <property type="entry name" value="H2.0-like homeobox protein"/>
    <property type="match status" value="1"/>
</dbReference>
<dbReference type="Gene3D" id="1.10.10.60">
    <property type="entry name" value="Homeodomain-like"/>
    <property type="match status" value="1"/>
</dbReference>
<dbReference type="InterPro" id="IPR052497">
    <property type="entry name" value="H2.0_Homeobox_TF"/>
</dbReference>
<dbReference type="InterPro" id="IPR001356">
    <property type="entry name" value="HD"/>
</dbReference>
<dbReference type="InterPro" id="IPR020479">
    <property type="entry name" value="HD_metazoa"/>
</dbReference>
<dbReference type="InterPro" id="IPR017970">
    <property type="entry name" value="Homeobox_CS"/>
</dbReference>
<dbReference type="InterPro" id="IPR009057">
    <property type="entry name" value="Homeodomain-like_sf"/>
</dbReference>
<dbReference type="InterPro" id="IPR000047">
    <property type="entry name" value="HTH_motif"/>
</dbReference>
<dbReference type="PANTHER" id="PTHR46808">
    <property type="entry name" value="H2.0-LIKE HOMEOBOX PROTEIN"/>
    <property type="match status" value="1"/>
</dbReference>
<dbReference type="PANTHER" id="PTHR46808:SF1">
    <property type="entry name" value="H2.0-LIKE HOMEOBOX PROTEIN"/>
    <property type="match status" value="1"/>
</dbReference>
<dbReference type="Pfam" id="PF00046">
    <property type="entry name" value="Homeodomain"/>
    <property type="match status" value="1"/>
</dbReference>
<dbReference type="PRINTS" id="PR00024">
    <property type="entry name" value="HOMEOBOX"/>
</dbReference>
<dbReference type="PRINTS" id="PR00031">
    <property type="entry name" value="HTHREPRESSR"/>
</dbReference>
<dbReference type="SMART" id="SM00389">
    <property type="entry name" value="HOX"/>
    <property type="match status" value="1"/>
</dbReference>
<dbReference type="SUPFAM" id="SSF46689">
    <property type="entry name" value="Homeodomain-like"/>
    <property type="match status" value="1"/>
</dbReference>
<dbReference type="PROSITE" id="PS00027">
    <property type="entry name" value="HOMEOBOX_1"/>
    <property type="match status" value="1"/>
</dbReference>
<dbReference type="PROSITE" id="PS50071">
    <property type="entry name" value="HOMEOBOX_2"/>
    <property type="match status" value="1"/>
</dbReference>
<evidence type="ECO:0000250" key="1"/>
<evidence type="ECO:0000255" key="2">
    <source>
        <dbReference type="PROSITE-ProRule" id="PRU00108"/>
    </source>
</evidence>
<evidence type="ECO:0000256" key="3">
    <source>
        <dbReference type="SAM" id="MobiDB-lite"/>
    </source>
</evidence>
<evidence type="ECO:0000269" key="4">
    <source>
    </source>
</evidence>
<evidence type="ECO:0000269" key="5">
    <source ref="4"/>
</evidence>
<evidence type="ECO:0000305" key="6"/>
<proteinExistence type="evidence at protein level"/>